<proteinExistence type="inferred from homology"/>
<protein>
    <recommendedName>
        <fullName evidence="1">Dual-action ribosomal maturation protein DarP</fullName>
    </recommendedName>
    <alternativeName>
        <fullName evidence="1">Large ribosomal subunit assembly factor DarP</fullName>
    </alternativeName>
</protein>
<sequence>MAKQPEDWLNDYPAEEEEEEIIWVSKSEIKRDAEALKKLGTELVELSKSALERVPLDEDLLAAIELAQKIKREGRRRQLQFIGKLLRTRDVEPITIALDKLKNRHNQQITLLHKLEELRDKLIDGNDDVIDEVVALFPQTDRQQLRTLIRNAKKEKAANKPPKSYRQIFQYLKDMAESA</sequence>
<gene>
    <name evidence="1" type="primary">darP</name>
    <name type="ordered locus">plu4061</name>
</gene>
<feature type="chain" id="PRO_0000208222" description="Dual-action ribosomal maturation protein DarP">
    <location>
        <begin position="1"/>
        <end position="179"/>
    </location>
</feature>
<evidence type="ECO:0000255" key="1">
    <source>
        <dbReference type="HAMAP-Rule" id="MF_00765"/>
    </source>
</evidence>
<name>DARP_PHOLL</name>
<comment type="function">
    <text evidence="1">Member of a network of 50S ribosomal subunit biogenesis factors which assembles along the 30S-50S interface, preventing incorrect 23S rRNA structures from forming. Promotes peptidyl transferase center (PTC) maturation.</text>
</comment>
<comment type="subcellular location">
    <subcellularLocation>
        <location evidence="1">Cytoplasm</location>
    </subcellularLocation>
    <text evidence="1">Associates with late stage pre-50S ribosomal subunits.</text>
</comment>
<comment type="similarity">
    <text evidence="1">Belongs to the DarP family.</text>
</comment>
<dbReference type="EMBL" id="BX571872">
    <property type="protein sequence ID" value="CAE16433.1"/>
    <property type="molecule type" value="Genomic_DNA"/>
</dbReference>
<dbReference type="RefSeq" id="WP_011148184.1">
    <property type="nucleotide sequence ID" value="NC_005126.1"/>
</dbReference>
<dbReference type="SMR" id="Q7N042"/>
<dbReference type="STRING" id="243265.plu4061"/>
<dbReference type="GeneID" id="48850280"/>
<dbReference type="KEGG" id="plu:plu4061"/>
<dbReference type="eggNOG" id="COG3028">
    <property type="taxonomic scope" value="Bacteria"/>
</dbReference>
<dbReference type="HOGENOM" id="CLU_106757_2_0_6"/>
<dbReference type="OrthoDB" id="5293604at2"/>
<dbReference type="Proteomes" id="UP000002514">
    <property type="component" value="Chromosome"/>
</dbReference>
<dbReference type="GO" id="GO:0005829">
    <property type="term" value="C:cytosol"/>
    <property type="evidence" value="ECO:0007669"/>
    <property type="project" value="TreeGrafter"/>
</dbReference>
<dbReference type="GO" id="GO:0043022">
    <property type="term" value="F:ribosome binding"/>
    <property type="evidence" value="ECO:0007669"/>
    <property type="project" value="UniProtKB-UniRule"/>
</dbReference>
<dbReference type="GO" id="GO:0019843">
    <property type="term" value="F:rRNA binding"/>
    <property type="evidence" value="ECO:0007669"/>
    <property type="project" value="UniProtKB-UniRule"/>
</dbReference>
<dbReference type="GO" id="GO:1902626">
    <property type="term" value="P:assembly of large subunit precursor of preribosome"/>
    <property type="evidence" value="ECO:0007669"/>
    <property type="project" value="UniProtKB-UniRule"/>
</dbReference>
<dbReference type="CDD" id="cd16331">
    <property type="entry name" value="YjgA-like"/>
    <property type="match status" value="1"/>
</dbReference>
<dbReference type="FunFam" id="1.10.60.30:FF:000001">
    <property type="entry name" value="UPF0307 protein YjgA"/>
    <property type="match status" value="1"/>
</dbReference>
<dbReference type="FunFam" id="1.10.60.30:FF:000002">
    <property type="entry name" value="UPF0307 protein YjgA"/>
    <property type="match status" value="1"/>
</dbReference>
<dbReference type="Gene3D" id="1.10.60.30">
    <property type="entry name" value="PSPTO4464-like domains"/>
    <property type="match status" value="2"/>
</dbReference>
<dbReference type="HAMAP" id="MF_00765">
    <property type="entry name" value="DarP"/>
    <property type="match status" value="1"/>
</dbReference>
<dbReference type="InterPro" id="IPR006839">
    <property type="entry name" value="DarP"/>
</dbReference>
<dbReference type="InterPro" id="IPR023153">
    <property type="entry name" value="DarP_sf"/>
</dbReference>
<dbReference type="NCBIfam" id="NF003593">
    <property type="entry name" value="PRK05255.1-1"/>
    <property type="match status" value="1"/>
</dbReference>
<dbReference type="PANTHER" id="PTHR38101">
    <property type="entry name" value="UPF0307 PROTEIN YJGA"/>
    <property type="match status" value="1"/>
</dbReference>
<dbReference type="PANTHER" id="PTHR38101:SF1">
    <property type="entry name" value="UPF0307 PROTEIN YJGA"/>
    <property type="match status" value="1"/>
</dbReference>
<dbReference type="Pfam" id="PF04751">
    <property type="entry name" value="DarP"/>
    <property type="match status" value="1"/>
</dbReference>
<dbReference type="PIRSF" id="PIRSF016183">
    <property type="entry name" value="UCP016183"/>
    <property type="match status" value="1"/>
</dbReference>
<dbReference type="SUPFAM" id="SSF158710">
    <property type="entry name" value="PSPTO4464-like"/>
    <property type="match status" value="1"/>
</dbReference>
<accession>Q7N042</accession>
<reference key="1">
    <citation type="journal article" date="2003" name="Nat. Biotechnol.">
        <title>The genome sequence of the entomopathogenic bacterium Photorhabdus luminescens.</title>
        <authorList>
            <person name="Duchaud E."/>
            <person name="Rusniok C."/>
            <person name="Frangeul L."/>
            <person name="Buchrieser C."/>
            <person name="Givaudan A."/>
            <person name="Taourit S."/>
            <person name="Bocs S."/>
            <person name="Boursaux-Eude C."/>
            <person name="Chandler M."/>
            <person name="Charles J.-F."/>
            <person name="Dassa E."/>
            <person name="Derose R."/>
            <person name="Derzelle S."/>
            <person name="Freyssinet G."/>
            <person name="Gaudriault S."/>
            <person name="Medigue C."/>
            <person name="Lanois A."/>
            <person name="Powell K."/>
            <person name="Siguier P."/>
            <person name="Vincent R."/>
            <person name="Wingate V."/>
            <person name="Zouine M."/>
            <person name="Glaser P."/>
            <person name="Boemare N."/>
            <person name="Danchin A."/>
            <person name="Kunst F."/>
        </authorList>
    </citation>
    <scope>NUCLEOTIDE SEQUENCE [LARGE SCALE GENOMIC DNA]</scope>
    <source>
        <strain>DSM 15139 / CIP 105565 / TT01</strain>
    </source>
</reference>
<organism>
    <name type="scientific">Photorhabdus laumondii subsp. laumondii (strain DSM 15139 / CIP 105565 / TT01)</name>
    <name type="common">Photorhabdus luminescens subsp. laumondii</name>
    <dbReference type="NCBI Taxonomy" id="243265"/>
    <lineage>
        <taxon>Bacteria</taxon>
        <taxon>Pseudomonadati</taxon>
        <taxon>Pseudomonadota</taxon>
        <taxon>Gammaproteobacteria</taxon>
        <taxon>Enterobacterales</taxon>
        <taxon>Morganellaceae</taxon>
        <taxon>Photorhabdus</taxon>
    </lineage>
</organism>
<keyword id="KW-0963">Cytoplasm</keyword>
<keyword id="KW-1185">Reference proteome</keyword>
<keyword id="KW-0690">Ribosome biogenesis</keyword>
<keyword id="KW-0694">RNA-binding</keyword>
<keyword id="KW-0699">rRNA-binding</keyword>